<dbReference type="EMBL" id="HM005425">
    <property type="protein sequence ID" value="AEE61023.1"/>
    <property type="molecule type" value="mRNA"/>
</dbReference>
<dbReference type="EMBL" id="AC083841">
    <property type="status" value="NOT_ANNOTATED_CDS"/>
    <property type="molecule type" value="Genomic_DNA"/>
</dbReference>
<dbReference type="EMBL" id="CH471162">
    <property type="protein sequence ID" value="EAW82299.1"/>
    <property type="molecule type" value="Genomic_DNA"/>
</dbReference>
<dbReference type="EMBL" id="CH471162">
    <property type="protein sequence ID" value="EAW82301.1"/>
    <property type="molecule type" value="Genomic_DNA"/>
</dbReference>
<dbReference type="EMBL" id="CH471162">
    <property type="protein sequence ID" value="EAW82302.1"/>
    <property type="molecule type" value="Genomic_DNA"/>
</dbReference>
<dbReference type="EMBL" id="CH471162">
    <property type="protein sequence ID" value="EAW82303.1"/>
    <property type="molecule type" value="Genomic_DNA"/>
</dbReference>
<dbReference type="EMBL" id="CH471162">
    <property type="protein sequence ID" value="EAW82304.1"/>
    <property type="molecule type" value="Genomic_DNA"/>
</dbReference>
<dbReference type="EMBL" id="AF321824">
    <property type="protein sequence ID" value="AAK01642.1"/>
    <property type="molecule type" value="mRNA"/>
</dbReference>
<dbReference type="CCDS" id="CCDS6389.1"/>
<dbReference type="RefSeq" id="NP_001343299.1">
    <molecule id="P0DP58-1"/>
    <property type="nucleotide sequence ID" value="NM_001356370.1"/>
</dbReference>
<dbReference type="RefSeq" id="NP_076435.1">
    <molecule id="P0DP58-2"/>
    <property type="nucleotide sequence ID" value="NM_023946.3"/>
</dbReference>
<dbReference type="RefSeq" id="NP_803252.1">
    <molecule id="P0DP58-1"/>
    <property type="nucleotide sequence ID" value="NM_177457.5"/>
</dbReference>
<dbReference type="RefSeq" id="NP_803429.1">
    <molecule id="P0DP58-1"/>
    <property type="nucleotide sequence ID" value="NM_177476.4"/>
</dbReference>
<dbReference type="RefSeq" id="NP_803430.1">
    <molecule id="P0DP58-1"/>
    <property type="nucleotide sequence ID" value="NM_177477.4"/>
</dbReference>
<dbReference type="PDB" id="2L03">
    <property type="method" value="NMR"/>
    <property type="chains" value="A=21-93"/>
</dbReference>
<dbReference type="PDBsum" id="2L03"/>
<dbReference type="SMR" id="P0DP58"/>
<dbReference type="FunCoup" id="P0DP58">
    <property type="interactions" value="371"/>
</dbReference>
<dbReference type="IntAct" id="P0DP58">
    <property type="interactions" value="25"/>
</dbReference>
<dbReference type="STRING" id="9606.ENSP00000477648"/>
<dbReference type="iPTMnet" id="P0DP58"/>
<dbReference type="PhosphoSitePlus" id="P0DP58"/>
<dbReference type="BioMuta" id="LYNX1"/>
<dbReference type="jPOST" id="P0DP58"/>
<dbReference type="MassIVE" id="P0DP58"/>
<dbReference type="PaxDb" id="9606-ENSP00000479586"/>
<dbReference type="PeptideAtlas" id="P0DP58"/>
<dbReference type="Antibodypedia" id="21624">
    <property type="antibodies" value="29 antibodies from 13 providers"/>
</dbReference>
<dbReference type="DNASU" id="66004"/>
<dbReference type="Ensembl" id="ENST00000614491.1">
    <molecule id="P0DP58-1"/>
    <property type="protein sequence ID" value="ENSP00000477648.1"/>
    <property type="gene ID" value="ENSG00000180155.20"/>
</dbReference>
<dbReference type="Ensembl" id="ENST00000620006.4">
    <molecule id="P0DP58-1"/>
    <property type="protein sequence ID" value="ENSP00000478402.1"/>
    <property type="gene ID" value="ENSG00000180155.20"/>
</dbReference>
<dbReference type="Ensembl" id="ENST00000621401.4">
    <molecule id="P0DP58-1"/>
    <property type="protein sequence ID" value="ENSP00000478390.1"/>
    <property type="gene ID" value="ENSG00000180155.20"/>
</dbReference>
<dbReference type="Ensembl" id="ENST00000652477.1">
    <molecule id="P0DP58-1"/>
    <property type="protein sequence ID" value="ENSP00000498325.1"/>
    <property type="gene ID" value="ENSG00000180155.20"/>
</dbReference>
<dbReference type="GeneID" id="66004"/>
<dbReference type="KEGG" id="hsa:111188157"/>
<dbReference type="KEGG" id="hsa:66004"/>
<dbReference type="MANE-Select" id="ENST00000652477.1">
    <property type="protein sequence ID" value="ENSP00000498325.1"/>
    <property type="RefSeq nucleotide sequence ID" value="NM_177477.4"/>
    <property type="RefSeq protein sequence ID" value="NP_803430.1"/>
</dbReference>
<dbReference type="AGR" id="HGNC:29604"/>
<dbReference type="AGR" id="HGNC:52291"/>
<dbReference type="CTD" id="111188157"/>
<dbReference type="CTD" id="66004"/>
<dbReference type="DisGeNET" id="66004"/>
<dbReference type="GeneCards" id="LYNX1"/>
<dbReference type="HGNC" id="HGNC:29604">
    <property type="gene designation" value="LYNX1"/>
</dbReference>
<dbReference type="HPA" id="ENSG00000180155">
    <property type="expression patterns" value="Tissue enhanced (brain, heart muscle)"/>
</dbReference>
<dbReference type="MIM" id="606110">
    <property type="type" value="gene"/>
</dbReference>
<dbReference type="neXtProt" id="NX_P0DP58"/>
<dbReference type="OpenTargets" id="ENSG00000180155"/>
<dbReference type="VEuPathDB" id="HostDB:ENSG00000180155"/>
<dbReference type="eggNOG" id="ENOG502T3MP">
    <property type="taxonomic scope" value="Eukaryota"/>
</dbReference>
<dbReference type="GeneTree" id="ENSGT00730000111571"/>
<dbReference type="InParanoid" id="P0DP58"/>
<dbReference type="OMA" id="CIAFATR"/>
<dbReference type="OrthoDB" id="9836900at2759"/>
<dbReference type="PAN-GO" id="P0DP58">
    <property type="GO annotations" value="3 GO annotations based on evolutionary models"/>
</dbReference>
<dbReference type="PathwayCommons" id="P0DP58"/>
<dbReference type="SignaLink" id="P0DP58"/>
<dbReference type="BioGRID-ORCS" id="66004">
    <property type="hits" value="14 hits in 1144 CRISPR screens"/>
</dbReference>
<dbReference type="CD-CODE" id="FB4E32DD">
    <property type="entry name" value="Presynaptic clusters and postsynaptic densities"/>
</dbReference>
<dbReference type="EvolutionaryTrace" id="P0DP58"/>
<dbReference type="GenomeRNAi" id="66004"/>
<dbReference type="Pharos" id="P0DP58">
    <property type="development level" value="Tbio"/>
</dbReference>
<dbReference type="PRO" id="PR:P0DP58"/>
<dbReference type="Proteomes" id="UP000005640">
    <property type="component" value="Chromosome 8"/>
</dbReference>
<dbReference type="RNAct" id="P0DP58">
    <property type="molecule type" value="protein"/>
</dbReference>
<dbReference type="Bgee" id="ENSG00000180155">
    <property type="expression patterns" value="Expressed in apex of heart and 132 other cell types or tissues"/>
</dbReference>
<dbReference type="ExpressionAtlas" id="P0DP58">
    <property type="expression patterns" value="baseline and differential"/>
</dbReference>
<dbReference type="GO" id="GO:0030425">
    <property type="term" value="C:dendrite"/>
    <property type="evidence" value="ECO:0007669"/>
    <property type="project" value="UniProtKB-SubCell"/>
</dbReference>
<dbReference type="GO" id="GO:0005783">
    <property type="term" value="C:endoplasmic reticulum"/>
    <property type="evidence" value="ECO:0007669"/>
    <property type="project" value="UniProtKB-SubCell"/>
</dbReference>
<dbReference type="GO" id="GO:0005886">
    <property type="term" value="C:plasma membrane"/>
    <property type="evidence" value="ECO:0000318"/>
    <property type="project" value="GO_Central"/>
</dbReference>
<dbReference type="GO" id="GO:0098552">
    <property type="term" value="C:side of membrane"/>
    <property type="evidence" value="ECO:0007669"/>
    <property type="project" value="UniProtKB-KW"/>
</dbReference>
<dbReference type="GO" id="GO:0045202">
    <property type="term" value="C:synapse"/>
    <property type="evidence" value="ECO:0007669"/>
    <property type="project" value="GOC"/>
</dbReference>
<dbReference type="GO" id="GO:0033130">
    <property type="term" value="F:acetylcholine receptor binding"/>
    <property type="evidence" value="ECO:0000314"/>
    <property type="project" value="UniProtKB"/>
</dbReference>
<dbReference type="GO" id="GO:0030550">
    <property type="term" value="F:acetylcholine receptor inhibitor activity"/>
    <property type="evidence" value="ECO:0000318"/>
    <property type="project" value="GO_Central"/>
</dbReference>
<dbReference type="GO" id="GO:0030548">
    <property type="term" value="F:acetylcholine receptor regulator activity"/>
    <property type="evidence" value="ECO:0000314"/>
    <property type="project" value="UniProtKB"/>
</dbReference>
<dbReference type="GO" id="GO:0008200">
    <property type="term" value="F:ion channel inhibitor activity"/>
    <property type="evidence" value="ECO:0007669"/>
    <property type="project" value="Ensembl"/>
</dbReference>
<dbReference type="GO" id="GO:0095500">
    <property type="term" value="P:acetylcholine receptor signaling pathway"/>
    <property type="evidence" value="ECO:0000318"/>
    <property type="project" value="GO_Central"/>
</dbReference>
<dbReference type="GO" id="GO:0099601">
    <property type="term" value="P:regulation of neurotransmitter receptor activity"/>
    <property type="evidence" value="ECO:0000314"/>
    <property type="project" value="UniProtKB"/>
</dbReference>
<dbReference type="GO" id="GO:0007271">
    <property type="term" value="P:synaptic transmission, cholinergic"/>
    <property type="evidence" value="ECO:0007669"/>
    <property type="project" value="Ensembl"/>
</dbReference>
<dbReference type="CDD" id="cd23585">
    <property type="entry name" value="TFP_LU_ECD_LYNX1"/>
    <property type="match status" value="1"/>
</dbReference>
<dbReference type="FunFam" id="2.10.60.10:FF:000003">
    <property type="entry name" value="lymphocyte antigen 6E isoform X1"/>
    <property type="match status" value="1"/>
</dbReference>
<dbReference type="Gene3D" id="2.10.60.10">
    <property type="entry name" value="CD59"/>
    <property type="match status" value="1"/>
</dbReference>
<dbReference type="InterPro" id="IPR051110">
    <property type="entry name" value="Ly-6/neurotoxin-like_GPI-ap"/>
</dbReference>
<dbReference type="InterPro" id="IPR016054">
    <property type="entry name" value="LY6_UPA_recep-like"/>
</dbReference>
<dbReference type="InterPro" id="IPR045860">
    <property type="entry name" value="Snake_toxin-like_sf"/>
</dbReference>
<dbReference type="InterPro" id="IPR035076">
    <property type="entry name" value="Toxin/TOLIP"/>
</dbReference>
<dbReference type="PANTHER" id="PTHR16983:SF27">
    <property type="entry name" value="LY-6_NEUROTOXIN-LIKE PROTEIN 1"/>
    <property type="match status" value="1"/>
</dbReference>
<dbReference type="PANTHER" id="PTHR16983">
    <property type="entry name" value="UPAR/LY6 DOMAIN-CONTAINING PROTEIN"/>
    <property type="match status" value="1"/>
</dbReference>
<dbReference type="Pfam" id="PF00087">
    <property type="entry name" value="Toxin_TOLIP"/>
    <property type="match status" value="1"/>
</dbReference>
<dbReference type="SMART" id="SM00134">
    <property type="entry name" value="LU"/>
    <property type="match status" value="1"/>
</dbReference>
<dbReference type="SUPFAM" id="SSF57302">
    <property type="entry name" value="Snake toxin-like"/>
    <property type="match status" value="1"/>
</dbReference>
<protein>
    <recommendedName>
        <fullName evidence="9">Ly-6/neurotoxin-like protein 1</fullName>
    </recommendedName>
    <alternativeName>
        <fullName evidence="6">Endogenous prototoxin LYNX1</fullName>
    </alternativeName>
    <alternativeName>
        <fullName evidence="11">Testicular tissue protein Li 112</fullName>
    </alternativeName>
</protein>
<accession>P0DP58</accession>
<accession>A0A140VJN6</accession>
<accession>D3DWI7</accession>
<accession>G3XAC2</accession>
<accession>Q86SR0</accession>
<accession>Q9BZG9</accession>
<organism>
    <name type="scientific">Homo sapiens</name>
    <name type="common">Human</name>
    <dbReference type="NCBI Taxonomy" id="9606"/>
    <lineage>
        <taxon>Eukaryota</taxon>
        <taxon>Metazoa</taxon>
        <taxon>Chordata</taxon>
        <taxon>Craniata</taxon>
        <taxon>Vertebrata</taxon>
        <taxon>Euteleostomi</taxon>
        <taxon>Mammalia</taxon>
        <taxon>Eutheria</taxon>
        <taxon>Euarchontoglires</taxon>
        <taxon>Primates</taxon>
        <taxon>Haplorrhini</taxon>
        <taxon>Catarrhini</taxon>
        <taxon>Hominidae</taxon>
        <taxon>Homo</taxon>
    </lineage>
</organism>
<name>LYNX1_HUMAN</name>
<keyword id="KW-0002">3D-structure</keyword>
<keyword id="KW-0025">Alternative splicing</keyword>
<keyword id="KW-1003">Cell membrane</keyword>
<keyword id="KW-0966">Cell projection</keyword>
<keyword id="KW-1015">Disulfide bond</keyword>
<keyword id="KW-0256">Endoplasmic reticulum</keyword>
<keyword id="KW-0325">Glycoprotein</keyword>
<keyword id="KW-0336">GPI-anchor</keyword>
<keyword id="KW-0449">Lipoprotein</keyword>
<keyword id="KW-0472">Membrane</keyword>
<keyword id="KW-1267">Proteomics identification</keyword>
<keyword id="KW-1185">Reference proteome</keyword>
<keyword id="KW-0732">Signal</keyword>
<feature type="signal peptide" evidence="2">
    <location>
        <begin position="1"/>
        <end position="20"/>
    </location>
</feature>
<feature type="chain" id="PRO_0000036154" description="Ly-6/neurotoxin-like protein 1" evidence="2">
    <location>
        <begin position="21"/>
        <end position="91"/>
    </location>
</feature>
<feature type="propeptide" id="PRO_0000440641" description="Removed in mature form" evidence="2">
    <location>
        <begin position="92"/>
        <end position="116"/>
    </location>
</feature>
<feature type="domain" description="UPAR/Ly6" evidence="2">
    <location>
        <begin position="21"/>
        <end position="107"/>
    </location>
</feature>
<feature type="lipid moiety-binding region" description="GPI-anchor amidated cysteine" evidence="2">
    <location>
        <position position="91"/>
    </location>
</feature>
<feature type="disulfide bond" evidence="3 13">
    <location>
        <begin position="23"/>
        <end position="46"/>
    </location>
</feature>
<feature type="disulfide bond" evidence="3 13">
    <location>
        <begin position="26"/>
        <end position="33"/>
    </location>
</feature>
<feature type="disulfide bond" evidence="3 13">
    <location>
        <begin position="39"/>
        <end position="64"/>
    </location>
</feature>
<feature type="disulfide bond" evidence="3 13">
    <location>
        <begin position="68"/>
        <end position="85"/>
    </location>
</feature>
<feature type="disulfide bond" evidence="3 13">
    <location>
        <begin position="86"/>
        <end position="91"/>
    </location>
</feature>
<feature type="splice variant" id="VSP_058978" description="In isoform 2.">
    <original>YYTPTRMKVSKSCVPRCFETVYDGYSKHASTTSCCQYDLCNGTGLATPATLALAPILLATLWGLL</original>
    <variation>SAAEAIWCHQCTGFGGCSHGSRCLRDSTHCVTTATRVLSNTEDLPLVTKMCHIGCPDIPSLGLGPYVSIACCQTSLCNHD</variation>
    <location>
        <begin position="52"/>
        <end position="116"/>
    </location>
</feature>
<feature type="strand" evidence="14">
    <location>
        <begin position="22"/>
        <end position="24"/>
    </location>
</feature>
<feature type="strand" evidence="14">
    <location>
        <begin position="26"/>
        <end position="31"/>
    </location>
</feature>
<feature type="strand" evidence="14">
    <location>
        <begin position="36"/>
        <end position="38"/>
    </location>
</feature>
<feature type="strand" evidence="14">
    <location>
        <begin position="45"/>
        <end position="54"/>
    </location>
</feature>
<feature type="strand" evidence="14">
    <location>
        <begin position="57"/>
        <end position="66"/>
    </location>
</feature>
<feature type="strand" evidence="14">
    <location>
        <begin position="75"/>
        <end position="77"/>
    </location>
</feature>
<feature type="strand" evidence="14">
    <location>
        <begin position="80"/>
        <end position="86"/>
    </location>
</feature>
<feature type="turn" evidence="14">
    <location>
        <begin position="89"/>
        <end position="92"/>
    </location>
</feature>
<comment type="function">
    <text evidence="1 3 5">Acts in different tissues through interaction to nicotinic acetylcholine receptors (nAChRs) (PubMed:21252236). The proposed role as modulator of nAChR activity seems to be dependent on the nAChR subtype and stoichiometry, and to involve an effect on nAChR trafficking and its cell surface expression, and on single channel properties of the nAChR inserted in the plasma membrane. Modulates functional properties of nicotinic acetylcholine receptors (nAChRs) to prevent excessive excitation, and hence neurodegeneration. Enhances desensitization by increasing both the rate and extent of desensitization of alpha-4:beta-2-containing nAChRs and slowing recovery from desensitization. Promotes large amplitude ACh-evoked currents through alpha-4:beta-2 nAChRs. Is involved in regulation of the nAChR pentameric assembly in the endoplasmic reticulum. Shifts stoichiometry from high sensitivity alpha-4(2):beta-2(3) to low sensitivity alpha-4(3):beta-2(2) nAChR (By similarity). In vitro modulates alpha-3:beta-4-containing nAChRs. Reduces cell surface expression of (alpha-3:beta-4)(2):beta-4 and (alpha-3:beta-4)(2):alpha-5 nAChRs suggesting an interaction with nAChR alpha-3(-):(+)beta-4 subunit interfaces and an allosteric mode. Corresponding single channel effects characterized by decreased unitary conductance, altered burst proportions and enhanced desensitization/inactivation seem to depend on nAChR alpha:alpha subunit interfaces and are greater in (alpha-3:beta-2)(2):alpha-3 when compared to (alpha-3:beta-2)(2):alpha-5 nAChRs (PubMed:28100642). Prevents plasticity in the primary visual cortex late in life (By similarity).</text>
</comment>
<comment type="subunit">
    <text evidence="1 4">Interacts with nAChRs containing alpha-4:beta-2 (CHRNA4:CHRNB2) and alpha-7 (CHRNA7) subunits. Interacts with CHRNA4 probably in the endoplasmic reticulum prior to nAChR pentameric assembly (By similarity). Interacts with KCNA2/Potassium voltage-gated channel subfamily A member 2 (PubMed:24613312).</text>
</comment>
<comment type="interaction">
    <interactant intactId="EBI-21916939">
        <id>P0DP58-2</id>
    </interactant>
    <interactant intactId="EBI-718729">
        <id>P55212</id>
        <label>CASP6</label>
    </interactant>
    <organismsDiffer>false</organismsDiffer>
    <experiments>3</experiments>
</comment>
<comment type="interaction">
    <interactant intactId="EBI-21916939">
        <id>P0DP58-2</id>
    </interactant>
    <interactant intactId="EBI-745535">
        <id>Q8NI60</id>
        <label>COQ8A</label>
    </interactant>
    <organismsDiffer>false</organismsDiffer>
    <experiments>3</experiments>
</comment>
<comment type="interaction">
    <interactant intactId="EBI-21916939">
        <id>P0DP58-2</id>
    </interactant>
    <interactant intactId="EBI-348399">
        <id>P22607</id>
        <label>FGFR3</label>
    </interactant>
    <organismsDiffer>false</organismsDiffer>
    <experiments>3</experiments>
</comment>
<comment type="interaction">
    <interactant intactId="EBI-21916939">
        <id>P0DP58-2</id>
    </interactant>
    <interactant intactId="EBI-351506">
        <id>P06396</id>
        <label>GSN</label>
    </interactant>
    <organismsDiffer>false</organismsDiffer>
    <experiments>3</experiments>
</comment>
<comment type="interaction">
    <interactant intactId="EBI-21916939">
        <id>P0DP58-2</id>
    </interactant>
    <interactant intactId="EBI-21591415">
        <id>P13473-2</id>
        <label>LAMP2</label>
    </interactant>
    <organismsDiffer>false</organismsDiffer>
    <experiments>3</experiments>
</comment>
<comment type="subcellular location">
    <subcellularLocation>
        <location evidence="2">Cell membrane</location>
        <topology evidence="2">Lipid-anchor</topology>
        <topology evidence="2">GPI-anchor</topology>
    </subcellularLocation>
    <subcellularLocation>
        <location evidence="1">Cell projection</location>
        <location evidence="1">Dendrite</location>
    </subcellularLocation>
    <subcellularLocation>
        <location evidence="1">Endoplasmic reticulum</location>
    </subcellularLocation>
    <text evidence="1">Detected in Purkinje cells soma and proximal dendrites.</text>
</comment>
<comment type="alternative products">
    <event type="alternative splicing"/>
    <isoform>
        <id>P0DP58-1</id>
        <id>Q9BZG9-2</id>
        <name>1</name>
        <name evidence="8">LYNX1</name>
        <sequence type="displayed"/>
    </isoform>
    <isoform>
        <id>P0DP58-2</id>
        <id>Q9BZG9-1</id>
        <name>2</name>
        <name evidence="7">LYNX1-SLURP2</name>
        <sequence type="described" ref="VSP_058978"/>
    </isoform>
</comment>
<comment type="miscellaneous">
    <text evidence="6">Isoform 1 is considered to be an endogenous 'prototoxin', that shares a N-terminal three-finger structure with snake alpha-neurotoxins.</text>
</comment>
<comment type="miscellaneous">
    <molecule>Isoform 2</molecule>
    <text evidence="10">Based on a naturally occurring readthrough transcript which produces a LYNX1-SLURP2 fusion protein.</text>
</comment>
<gene>
    <name evidence="12" type="primary">LYNX1</name>
</gene>
<sequence length="116" mass="12641">MTPLLTLILVVLMGLPLAQALDCHVCAYNGDNCFNPMRCPAMVAYCMTTRTYYTPTRMKVSKSCVPRCFETVYDGYSKHASTTSCCQYDLCNGTGLATPATLALAPILLATLWGLL</sequence>
<evidence type="ECO:0000250" key="1">
    <source>
        <dbReference type="UniProtKB" id="P0DP60"/>
    </source>
</evidence>
<evidence type="ECO:0000255" key="2"/>
<evidence type="ECO:0000269" key="3">
    <source>
    </source>
</evidence>
<evidence type="ECO:0000269" key="4">
    <source>
    </source>
</evidence>
<evidence type="ECO:0000269" key="5">
    <source>
    </source>
</evidence>
<evidence type="ECO:0000303" key="6">
    <source>
    </source>
</evidence>
<evidence type="ECO:0000303" key="7">
    <source>
    </source>
</evidence>
<evidence type="ECO:0000303" key="8">
    <source ref="1"/>
</evidence>
<evidence type="ECO:0000305" key="9"/>
<evidence type="ECO:0000305" key="10">
    <source>
    </source>
</evidence>
<evidence type="ECO:0000312" key="11">
    <source>
        <dbReference type="EMBL" id="AEE61023.1"/>
    </source>
</evidence>
<evidence type="ECO:0000312" key="12">
    <source>
        <dbReference type="HGNC" id="HGNC:29604"/>
    </source>
</evidence>
<evidence type="ECO:0007744" key="13">
    <source>
        <dbReference type="PDB" id="2L03"/>
    </source>
</evidence>
<evidence type="ECO:0007829" key="14">
    <source>
        <dbReference type="PDB" id="2L03"/>
    </source>
</evidence>
<proteinExistence type="evidence at protein level"/>
<reference key="1">
    <citation type="submission" date="2010-03" db="EMBL/GenBank/DDBJ databases">
        <title>Human testis protein.</title>
        <authorList>
            <person name="Li J.Y."/>
        </authorList>
    </citation>
    <scope>NUCLEOTIDE SEQUENCE [MRNA] (ISOFORM 2)</scope>
</reference>
<reference key="2">
    <citation type="journal article" date="2006" name="Nature">
        <title>DNA sequence and analysis of human chromosome 8.</title>
        <authorList>
            <person name="Nusbaum C."/>
            <person name="Mikkelsen T.S."/>
            <person name="Zody M.C."/>
            <person name="Asakawa S."/>
            <person name="Taudien S."/>
            <person name="Garber M."/>
            <person name="Kodira C.D."/>
            <person name="Schueler M.G."/>
            <person name="Shimizu A."/>
            <person name="Whittaker C.A."/>
            <person name="Chang J.L."/>
            <person name="Cuomo C.A."/>
            <person name="Dewar K."/>
            <person name="FitzGerald M.G."/>
            <person name="Yang X."/>
            <person name="Allen N.R."/>
            <person name="Anderson S."/>
            <person name="Asakawa T."/>
            <person name="Blechschmidt K."/>
            <person name="Bloom T."/>
            <person name="Borowsky M.L."/>
            <person name="Butler J."/>
            <person name="Cook A."/>
            <person name="Corum B."/>
            <person name="DeArellano K."/>
            <person name="DeCaprio D."/>
            <person name="Dooley K.T."/>
            <person name="Dorris L. III"/>
            <person name="Engels R."/>
            <person name="Gloeckner G."/>
            <person name="Hafez N."/>
            <person name="Hagopian D.S."/>
            <person name="Hall J.L."/>
            <person name="Ishikawa S.K."/>
            <person name="Jaffe D.B."/>
            <person name="Kamat A."/>
            <person name="Kudoh J."/>
            <person name="Lehmann R."/>
            <person name="Lokitsang T."/>
            <person name="Macdonald P."/>
            <person name="Major J.E."/>
            <person name="Matthews C.D."/>
            <person name="Mauceli E."/>
            <person name="Menzel U."/>
            <person name="Mihalev A.H."/>
            <person name="Minoshima S."/>
            <person name="Murayama Y."/>
            <person name="Naylor J.W."/>
            <person name="Nicol R."/>
            <person name="Nguyen C."/>
            <person name="O'Leary S.B."/>
            <person name="O'Neill K."/>
            <person name="Parker S.C.J."/>
            <person name="Polley A."/>
            <person name="Raymond C.K."/>
            <person name="Reichwald K."/>
            <person name="Rodriguez J."/>
            <person name="Sasaki T."/>
            <person name="Schilhabel M."/>
            <person name="Siddiqui R."/>
            <person name="Smith C.L."/>
            <person name="Sneddon T.P."/>
            <person name="Talamas J.A."/>
            <person name="Tenzin P."/>
            <person name="Topham K."/>
            <person name="Venkataraman V."/>
            <person name="Wen G."/>
            <person name="Yamazaki S."/>
            <person name="Young S.K."/>
            <person name="Zeng Q."/>
            <person name="Zimmer A.R."/>
            <person name="Rosenthal A."/>
            <person name="Birren B.W."/>
            <person name="Platzer M."/>
            <person name="Shimizu N."/>
            <person name="Lander E.S."/>
        </authorList>
    </citation>
    <scope>NUCLEOTIDE SEQUENCE [LARGE SCALE GENOMIC DNA]</scope>
</reference>
<reference key="3">
    <citation type="submission" date="2005-09" db="EMBL/GenBank/DDBJ databases">
        <authorList>
            <person name="Mural R.J."/>
            <person name="Istrail S."/>
            <person name="Sutton G.G."/>
            <person name="Florea L."/>
            <person name="Halpern A.L."/>
            <person name="Mobarry C.M."/>
            <person name="Lippert R."/>
            <person name="Walenz B."/>
            <person name="Shatkay H."/>
            <person name="Dew I."/>
            <person name="Miller J.R."/>
            <person name="Flanigan M.J."/>
            <person name="Edwards N.J."/>
            <person name="Bolanos R."/>
            <person name="Fasulo D."/>
            <person name="Halldorsson B.V."/>
            <person name="Hannenhalli S."/>
            <person name="Turner R."/>
            <person name="Yooseph S."/>
            <person name="Lu F."/>
            <person name="Nusskern D.R."/>
            <person name="Shue B.C."/>
            <person name="Zheng X.H."/>
            <person name="Zhong F."/>
            <person name="Delcher A.L."/>
            <person name="Huson D.H."/>
            <person name="Kravitz S.A."/>
            <person name="Mouchard L."/>
            <person name="Reinert K."/>
            <person name="Remington K.A."/>
            <person name="Clark A.G."/>
            <person name="Waterman M.S."/>
            <person name="Eichler E.E."/>
            <person name="Adams M.D."/>
            <person name="Hunkapiller M.W."/>
            <person name="Myers E.W."/>
            <person name="Venter J.C."/>
        </authorList>
    </citation>
    <scope>NUCLEOTIDE SEQUENCE [LARGE SCALE GENOMIC DNA]</scope>
</reference>
<reference key="4">
    <citation type="submission" date="2000-11" db="EMBL/GenBank/DDBJ databases">
        <authorList>
            <person name="Southan C."/>
            <person name="Simms M."/>
            <person name="Narjis S."/>
        </authorList>
    </citation>
    <scope>NUCLEOTIDE SEQUENCE [MRNA] OF 1-80 (ISOFORM 1)</scope>
</reference>
<reference key="5">
    <citation type="journal article" date="2015" name="Int. Immunopharmacol.">
        <title>Transcriptional regulation of SLURP2, a psoriasis-associated gene, is under control of IL-22 in the skin: A special reference to the nested gene LYNX1.</title>
        <authorList>
            <person name="Moriwaki Y."/>
            <person name="Takada K."/>
            <person name="Tsuji S."/>
            <person name="Kawashima K."/>
            <person name="Misawa H."/>
        </authorList>
    </citation>
    <scope>ALTERNATIVE SPLICING (ISOFORMS 1 AND 2)</scope>
</reference>
<reference key="6">
    <citation type="journal article" date="2011" name="J. Biol. Chem.">
        <title>NMR structure and action on nicotinic acetylcholine receptors of water-soluble domain of human LYNX1.</title>
        <authorList>
            <person name="Lyukmanova E.N."/>
            <person name="Shenkarev Z.O."/>
            <person name="Shulepko M.A."/>
            <person name="Mineev K.S."/>
            <person name="D'Hoedt D."/>
            <person name="Kasheverov I.E."/>
            <person name="Filkin S.Y."/>
            <person name="Krivolapova A.P."/>
            <person name="Janickova H."/>
            <person name="Dolezal V."/>
            <person name="Dolgikh D.A."/>
            <person name="Arseniev A.S."/>
            <person name="Bertrand D."/>
            <person name="Tsetlin V.I."/>
            <person name="Kirpichnikov M.P."/>
        </authorList>
    </citation>
    <scope>STRUCTURE BY NMR OF 21-93 (ISOFORM 1)</scope>
    <scope>FUNCTION</scope>
    <scope>DISULFIDE BONDS</scope>
    <scope>MISCELLANEOUS</scope>
</reference>
<reference key="7">
    <citation type="journal article" date="2014" name="Curr. Biol.">
        <title>SLEEPLESS is a bifunctional regulator of excitability and cholinergic synaptic transmission.</title>
        <authorList>
            <person name="Wu M."/>
            <person name="Robinson J.E."/>
            <person name="Joiner W.J."/>
        </authorList>
    </citation>
    <scope>INTERACTION WITH KCNA2</scope>
</reference>
<reference key="8">
    <citation type="journal article" date="2017" name="FASEB J.">
        <title>Isoform-specific mechanisms of alpha3beta4*-nicotinic acetylcholine receptor modulation by the prototoxin lynx1.</title>
        <authorList>
            <person name="George A.A."/>
            <person name="Bloy A."/>
            <person name="Miwa J.M."/>
            <person name="Lindstrom J.M."/>
            <person name="Lukas R.J."/>
            <person name="Whiteaker P."/>
        </authorList>
    </citation>
    <scope>FUNCTION</scope>
</reference>